<evidence type="ECO:0000255" key="1">
    <source>
        <dbReference type="HAMAP-Rule" id="MF_01365"/>
    </source>
</evidence>
<evidence type="ECO:0000305" key="2"/>
<feature type="chain" id="PRO_1000144073" description="Large ribosomal subunit protein uL6">
    <location>
        <begin position="1"/>
        <end position="177"/>
    </location>
</feature>
<protein>
    <recommendedName>
        <fullName evidence="1">Large ribosomal subunit protein uL6</fullName>
    </recommendedName>
    <alternativeName>
        <fullName evidence="2">50S ribosomal protein L6</fullName>
    </alternativeName>
</protein>
<keyword id="KW-0687">Ribonucleoprotein</keyword>
<keyword id="KW-0689">Ribosomal protein</keyword>
<keyword id="KW-0694">RNA-binding</keyword>
<keyword id="KW-0699">rRNA-binding</keyword>
<dbReference type="EMBL" id="CP000901">
    <property type="protein sequence ID" value="ABX85013.1"/>
    <property type="molecule type" value="Genomic_DNA"/>
</dbReference>
<dbReference type="RefSeq" id="WP_002213334.1">
    <property type="nucleotide sequence ID" value="NZ_CP009935.1"/>
</dbReference>
<dbReference type="SMR" id="A9R910"/>
<dbReference type="GeneID" id="96663181"/>
<dbReference type="KEGG" id="ypg:YpAngola_A0598"/>
<dbReference type="PATRIC" id="fig|349746.12.peg.1548"/>
<dbReference type="GO" id="GO:0022625">
    <property type="term" value="C:cytosolic large ribosomal subunit"/>
    <property type="evidence" value="ECO:0007669"/>
    <property type="project" value="TreeGrafter"/>
</dbReference>
<dbReference type="GO" id="GO:0019843">
    <property type="term" value="F:rRNA binding"/>
    <property type="evidence" value="ECO:0007669"/>
    <property type="project" value="UniProtKB-UniRule"/>
</dbReference>
<dbReference type="GO" id="GO:0003735">
    <property type="term" value="F:structural constituent of ribosome"/>
    <property type="evidence" value="ECO:0007669"/>
    <property type="project" value="InterPro"/>
</dbReference>
<dbReference type="GO" id="GO:0002181">
    <property type="term" value="P:cytoplasmic translation"/>
    <property type="evidence" value="ECO:0007669"/>
    <property type="project" value="TreeGrafter"/>
</dbReference>
<dbReference type="FunFam" id="3.90.930.12:FF:000001">
    <property type="entry name" value="50S ribosomal protein L6"/>
    <property type="match status" value="1"/>
</dbReference>
<dbReference type="FunFam" id="3.90.930.12:FF:000002">
    <property type="entry name" value="50S ribosomal protein L6"/>
    <property type="match status" value="1"/>
</dbReference>
<dbReference type="Gene3D" id="3.90.930.12">
    <property type="entry name" value="Ribosomal protein L6, alpha-beta domain"/>
    <property type="match status" value="2"/>
</dbReference>
<dbReference type="HAMAP" id="MF_01365_B">
    <property type="entry name" value="Ribosomal_uL6_B"/>
    <property type="match status" value="1"/>
</dbReference>
<dbReference type="InterPro" id="IPR000702">
    <property type="entry name" value="Ribosomal_uL6-like"/>
</dbReference>
<dbReference type="InterPro" id="IPR036789">
    <property type="entry name" value="Ribosomal_uL6-like_a/b-dom_sf"/>
</dbReference>
<dbReference type="InterPro" id="IPR020040">
    <property type="entry name" value="Ribosomal_uL6_a/b-dom"/>
</dbReference>
<dbReference type="InterPro" id="IPR019906">
    <property type="entry name" value="Ribosomal_uL6_bac-type"/>
</dbReference>
<dbReference type="InterPro" id="IPR002358">
    <property type="entry name" value="Ribosomal_uL6_CS"/>
</dbReference>
<dbReference type="NCBIfam" id="TIGR03654">
    <property type="entry name" value="L6_bact"/>
    <property type="match status" value="1"/>
</dbReference>
<dbReference type="PANTHER" id="PTHR11655">
    <property type="entry name" value="60S/50S RIBOSOMAL PROTEIN L6/L9"/>
    <property type="match status" value="1"/>
</dbReference>
<dbReference type="PANTHER" id="PTHR11655:SF14">
    <property type="entry name" value="LARGE RIBOSOMAL SUBUNIT PROTEIN UL6M"/>
    <property type="match status" value="1"/>
</dbReference>
<dbReference type="Pfam" id="PF00347">
    <property type="entry name" value="Ribosomal_L6"/>
    <property type="match status" value="2"/>
</dbReference>
<dbReference type="PIRSF" id="PIRSF002162">
    <property type="entry name" value="Ribosomal_L6"/>
    <property type="match status" value="1"/>
</dbReference>
<dbReference type="PRINTS" id="PR00059">
    <property type="entry name" value="RIBOSOMALL6"/>
</dbReference>
<dbReference type="SUPFAM" id="SSF56053">
    <property type="entry name" value="Ribosomal protein L6"/>
    <property type="match status" value="2"/>
</dbReference>
<dbReference type="PROSITE" id="PS00525">
    <property type="entry name" value="RIBOSOMAL_L6_1"/>
    <property type="match status" value="1"/>
</dbReference>
<organism>
    <name type="scientific">Yersinia pestis bv. Antiqua (strain Angola)</name>
    <dbReference type="NCBI Taxonomy" id="349746"/>
    <lineage>
        <taxon>Bacteria</taxon>
        <taxon>Pseudomonadati</taxon>
        <taxon>Pseudomonadota</taxon>
        <taxon>Gammaproteobacteria</taxon>
        <taxon>Enterobacterales</taxon>
        <taxon>Yersiniaceae</taxon>
        <taxon>Yersinia</taxon>
    </lineage>
</organism>
<sequence>MSRVAKAPVVIPAGVEVKLNGQVISIKGKNGELTRTVHSAVEVKQEENTLTFAPREGAVDGWAQAGTTRALLNSMVIGVTEGFTKKLQLVGVGYRAAVKGNVVNLALGFSHPVDHELPAGITAECPTQTEIVLKGADKQVIGQVAADLRAYRRPEPYKGKGVRYADEVVRTKEAKKK</sequence>
<name>RL6_YERPG</name>
<gene>
    <name evidence="1" type="primary">rplF</name>
    <name type="ordered locus">YpAngola_A0598</name>
</gene>
<accession>A9R910</accession>
<proteinExistence type="inferred from homology"/>
<reference key="1">
    <citation type="journal article" date="2010" name="J. Bacteriol.">
        <title>Genome sequence of the deep-rooted Yersinia pestis strain Angola reveals new insights into the evolution and pangenome of the plague bacterium.</title>
        <authorList>
            <person name="Eppinger M."/>
            <person name="Worsham P.L."/>
            <person name="Nikolich M.P."/>
            <person name="Riley D.R."/>
            <person name="Sebastian Y."/>
            <person name="Mou S."/>
            <person name="Achtman M."/>
            <person name="Lindler L.E."/>
            <person name="Ravel J."/>
        </authorList>
    </citation>
    <scope>NUCLEOTIDE SEQUENCE [LARGE SCALE GENOMIC DNA]</scope>
    <source>
        <strain>Angola</strain>
    </source>
</reference>
<comment type="function">
    <text evidence="1">This protein binds to the 23S rRNA, and is important in its secondary structure. It is located near the subunit interface in the base of the L7/L12 stalk, and near the tRNA binding site of the peptidyltransferase center.</text>
</comment>
<comment type="subunit">
    <text evidence="1">Part of the 50S ribosomal subunit.</text>
</comment>
<comment type="similarity">
    <text evidence="1">Belongs to the universal ribosomal protein uL6 family.</text>
</comment>